<keyword id="KW-1003">Cell membrane</keyword>
<keyword id="KW-0133">Cell shape</keyword>
<keyword id="KW-0961">Cell wall biogenesis/degradation</keyword>
<keyword id="KW-0903">Direct protein sequencing</keyword>
<keyword id="KW-0328">Glycosyltransferase</keyword>
<keyword id="KW-0472">Membrane</keyword>
<keyword id="KW-0573">Peptidoglycan synthesis</keyword>
<keyword id="KW-1185">Reference proteome</keyword>
<keyword id="KW-0808">Transferase</keyword>
<keyword id="KW-0812">Transmembrane</keyword>
<keyword id="KW-1133">Transmembrane helix</keyword>
<proteinExistence type="evidence at protein level"/>
<sequence>MKRSDRYSNSNEHFEHMKHEPHYNTYYQPVGKPPKKKKSKRILLKILLTILIIIALFIGIMYFLSTRDNVDELRKIENKSSFVSADNMPEYVKGAFISMEDERFYNHHGFDLKGTTRALFSTISDRDVQGGSTITQQVVKNYFYDNDRSFTRKVKELFVAHRVEKQYNKNEILSFYLNNIYFGDNQYTLEGAANHYFGTTVNKNSTTMSHITVLQSAILASKVNAPSVYNINNMSENFTQRVSTNLEKMKQQNYINETQYQQAMSQLNR</sequence>
<organism>
    <name type="scientific">Staphylococcus aureus (strain NCTC 8325 / PS 47)</name>
    <dbReference type="NCBI Taxonomy" id="93061"/>
    <lineage>
        <taxon>Bacteria</taxon>
        <taxon>Bacillati</taxon>
        <taxon>Bacillota</taxon>
        <taxon>Bacilli</taxon>
        <taxon>Bacillales</taxon>
        <taxon>Staphylococcaceae</taxon>
        <taxon>Staphylococcus</taxon>
    </lineage>
</organism>
<reference key="1">
    <citation type="journal article" date="2001" name="J. Bacteriol.">
        <title>Identification and characterization of a monofunctional glycosyltransferase from Staphylococcus aureus.</title>
        <authorList>
            <person name="Wang Q.M."/>
            <person name="Peery R.B."/>
            <person name="Johnson R.B."/>
            <person name="Alborn W.E."/>
            <person name="Yeh W.-K."/>
            <person name="Skatrud P.L."/>
        </authorList>
    </citation>
    <scope>NUCLEOTIDE SEQUENCE [GENOMIC DNA]</scope>
    <scope>PROTEIN SEQUENCE OF 1-15</scope>
    <scope>FUNCTION</scope>
    <scope>CATALYTIC ACTIVITY</scope>
    <scope>ACTIVITY REGULATION</scope>
    <scope>SUBCELLULAR LOCATION</scope>
</reference>
<reference key="2">
    <citation type="journal article" date="1993" name="Gene">
        <title>Sequence analysis of the region downstream from a peptidoglycan hydrolase-encoding gene from Staphylococcus aureus NCTC8325.</title>
        <authorList>
            <person name="Borchardt S.A."/>
            <person name="Babwah A.V."/>
            <person name="Jayaswal R.K."/>
        </authorList>
    </citation>
    <scope>NUCLEOTIDE SEQUENCE [GENOMIC DNA]</scope>
</reference>
<reference key="3">
    <citation type="book" date="2006" name="Gram positive pathogens, 2nd edition">
        <title>The Staphylococcus aureus NCTC 8325 genome.</title>
        <editorList>
            <person name="Fischetti V."/>
            <person name="Novick R."/>
            <person name="Ferretti J."/>
            <person name="Portnoy D."/>
            <person name="Rood J."/>
        </editorList>
        <authorList>
            <person name="Gillaspy A.F."/>
            <person name="Worrell V."/>
            <person name="Orvis J."/>
            <person name="Roe B.A."/>
            <person name="Dyer D.W."/>
            <person name="Iandolo J.J."/>
        </authorList>
    </citation>
    <scope>NUCLEOTIDE SEQUENCE [LARGE SCALE GENOMIC DNA]</scope>
    <source>
        <strain>NCTC 8325 / PS 47</strain>
    </source>
</reference>
<comment type="function">
    <text evidence="1 2">Peptidoglycan polymerase that catalyzes glycan chain elongation using lipid-linked disaccharide-pentapeptide as the substrate.</text>
</comment>
<comment type="catalytic activity">
    <reaction evidence="1 2">
        <text>[GlcNAc-(1-&gt;4)-Mur2Ac(oyl-L-Ala-gamma-D-Glu-L-Lys-D-Ala-D-Ala)](n)-di-trans,octa-cis-undecaprenyl diphosphate + beta-D-GlcNAc-(1-&gt;4)-Mur2Ac(oyl-L-Ala-gamma-D-Glu-L-Lys-D-Ala-D-Ala)-di-trans,octa-cis-undecaprenyl diphosphate = [GlcNAc-(1-&gt;4)-Mur2Ac(oyl-L-Ala-gamma-D-Glu-L-Lys-D-Ala-D-Ala)](n+1)-di-trans,octa-cis-undecaprenyl diphosphate + di-trans,octa-cis-undecaprenyl diphosphate + H(+)</text>
        <dbReference type="Rhea" id="RHEA:23708"/>
        <dbReference type="Rhea" id="RHEA-COMP:9602"/>
        <dbReference type="Rhea" id="RHEA-COMP:9603"/>
        <dbReference type="ChEBI" id="CHEBI:15378"/>
        <dbReference type="ChEBI" id="CHEBI:58405"/>
        <dbReference type="ChEBI" id="CHEBI:60033"/>
        <dbReference type="ChEBI" id="CHEBI:78435"/>
        <dbReference type="EC" id="2.4.99.28"/>
    </reaction>
</comment>
<comment type="activity regulation">
    <text evidence="2">Activity increases 3-fold at pH 6.1. Inhibited by moenomycin A.</text>
</comment>
<comment type="pathway">
    <text evidence="1 4">Cell wall biogenesis; peptidoglycan biosynthesis.</text>
</comment>
<comment type="subcellular location">
    <subcellularLocation>
        <location evidence="1 2">Cell membrane</location>
        <topology evidence="1">Single-pass membrane protein</topology>
    </subcellularLocation>
</comment>
<comment type="similarity">
    <text evidence="1 4">Belongs to the glycosyltransferase 51 family.</text>
</comment>
<comment type="sequence caution" evidence="4">
    <conflict type="erroneous termination">
        <sequence resource="EMBL-CDS" id="AAA18515"/>
    </conflict>
    <text>Truncated C-terminus. May be due to a cloning artifact.</text>
</comment>
<gene>
    <name evidence="1 3" type="primary">mgt</name>
    <name type="ordered locus">SAOUHSC_02012</name>
</gene>
<name>MGT_STAA8</name>
<protein>
    <recommendedName>
        <fullName evidence="1 3">Monofunctional glycosyltransferase</fullName>
        <shortName evidence="1 3">MGT</shortName>
        <ecNumber evidence="1 2">2.4.99.28</ecNumber>
    </recommendedName>
    <alternativeName>
        <fullName evidence="1 4">Peptidoglycan TGase</fullName>
    </alternativeName>
</protein>
<evidence type="ECO:0000255" key="1">
    <source>
        <dbReference type="HAMAP-Rule" id="MF_01434"/>
    </source>
</evidence>
<evidence type="ECO:0000269" key="2">
    <source>
    </source>
</evidence>
<evidence type="ECO:0000303" key="3">
    <source>
    </source>
</evidence>
<evidence type="ECO:0000305" key="4"/>
<dbReference type="EC" id="2.4.99.28" evidence="1 2"/>
<dbReference type="EMBL" id="AF287468">
    <property type="protein sequence ID" value="AAK83040.1"/>
    <property type="molecule type" value="Genomic_DNA"/>
</dbReference>
<dbReference type="EMBL" id="L19300">
    <property type="protein sequence ID" value="AAA18515.1"/>
    <property type="status" value="ALT_SEQ"/>
    <property type="molecule type" value="Unassigned_DNA"/>
</dbReference>
<dbReference type="EMBL" id="CP000253">
    <property type="protein sequence ID" value="ABD31068.1"/>
    <property type="molecule type" value="Genomic_DNA"/>
</dbReference>
<dbReference type="RefSeq" id="YP_500509.1">
    <property type="nucleotide sequence ID" value="NC_007795.1"/>
</dbReference>
<dbReference type="SMR" id="Q93Q23"/>
<dbReference type="STRING" id="93061.SAOUHSC_02012"/>
<dbReference type="CAZy" id="GT51">
    <property type="family name" value="Glycosyltransferase Family 51"/>
</dbReference>
<dbReference type="PaxDb" id="1280-SAXN108_1904"/>
<dbReference type="GeneID" id="3920466"/>
<dbReference type="KEGG" id="sao:SAOUHSC_02012"/>
<dbReference type="PATRIC" id="fig|93061.5.peg.1827"/>
<dbReference type="eggNOG" id="COG0744">
    <property type="taxonomic scope" value="Bacteria"/>
</dbReference>
<dbReference type="HOGENOM" id="CLU_006354_1_2_9"/>
<dbReference type="OrthoDB" id="9766909at2"/>
<dbReference type="BioCyc" id="MetaCyc:MONOMER-15458"/>
<dbReference type="UniPathway" id="UPA00219"/>
<dbReference type="PRO" id="PR:Q93Q23"/>
<dbReference type="Proteomes" id="UP000008816">
    <property type="component" value="Chromosome"/>
</dbReference>
<dbReference type="GO" id="GO:0005886">
    <property type="term" value="C:plasma membrane"/>
    <property type="evidence" value="ECO:0007669"/>
    <property type="project" value="UniProtKB-SubCell"/>
</dbReference>
<dbReference type="GO" id="GO:0008955">
    <property type="term" value="F:peptidoglycan glycosyltransferase activity"/>
    <property type="evidence" value="ECO:0007669"/>
    <property type="project" value="UniProtKB-UniRule"/>
</dbReference>
<dbReference type="GO" id="GO:0071555">
    <property type="term" value="P:cell wall organization"/>
    <property type="evidence" value="ECO:0007669"/>
    <property type="project" value="UniProtKB-KW"/>
</dbReference>
<dbReference type="GO" id="GO:0009252">
    <property type="term" value="P:peptidoglycan biosynthetic process"/>
    <property type="evidence" value="ECO:0007669"/>
    <property type="project" value="UniProtKB-UniRule"/>
</dbReference>
<dbReference type="GO" id="GO:0008360">
    <property type="term" value="P:regulation of cell shape"/>
    <property type="evidence" value="ECO:0007669"/>
    <property type="project" value="UniProtKB-KW"/>
</dbReference>
<dbReference type="Gene3D" id="1.10.3810.10">
    <property type="entry name" value="Biosynthetic peptidoglycan transglycosylase-like"/>
    <property type="match status" value="1"/>
</dbReference>
<dbReference type="HAMAP" id="MF_01434">
    <property type="entry name" value="MGT"/>
    <property type="match status" value="1"/>
</dbReference>
<dbReference type="InterPro" id="IPR001264">
    <property type="entry name" value="Glyco_trans_51"/>
</dbReference>
<dbReference type="InterPro" id="IPR050396">
    <property type="entry name" value="Glycosyltr_51/Transpeptidase"/>
</dbReference>
<dbReference type="InterPro" id="IPR023346">
    <property type="entry name" value="Lysozyme-like_dom_sf"/>
</dbReference>
<dbReference type="InterPro" id="IPR022978">
    <property type="entry name" value="Monofunct_glyco_trans"/>
</dbReference>
<dbReference type="InterPro" id="IPR036950">
    <property type="entry name" value="PBP_transglycosylase"/>
</dbReference>
<dbReference type="NCBIfam" id="NF010008">
    <property type="entry name" value="PRK13481.1"/>
    <property type="match status" value="1"/>
</dbReference>
<dbReference type="PANTHER" id="PTHR32282">
    <property type="entry name" value="BINDING PROTEIN TRANSPEPTIDASE, PUTATIVE-RELATED"/>
    <property type="match status" value="1"/>
</dbReference>
<dbReference type="PANTHER" id="PTHR32282:SF11">
    <property type="entry name" value="PENICILLIN-BINDING PROTEIN 1B"/>
    <property type="match status" value="1"/>
</dbReference>
<dbReference type="Pfam" id="PF00912">
    <property type="entry name" value="Transgly"/>
    <property type="match status" value="1"/>
</dbReference>
<dbReference type="SUPFAM" id="SSF53955">
    <property type="entry name" value="Lysozyme-like"/>
    <property type="match status" value="1"/>
</dbReference>
<accession>Q93Q23</accession>
<accession>Q2G2G8</accession>
<accession>Q53720</accession>
<feature type="chain" id="PRO_0000083152" description="Monofunctional glycosyltransferase">
    <location>
        <begin position="1"/>
        <end position="269"/>
    </location>
</feature>
<feature type="transmembrane region" description="Helical" evidence="1">
    <location>
        <begin position="46"/>
        <end position="66"/>
    </location>
</feature>
<feature type="sequence conflict" description="In Ref. 1; AAK83040." evidence="4" ref="1">
    <location>
        <begin position="257"/>
        <end position="258"/>
    </location>
</feature>